<protein>
    <recommendedName>
        <fullName evidence="1">D-amino acid dehydrogenase</fullName>
        <ecNumber evidence="1">1.4.99.-</ecNumber>
    </recommendedName>
</protein>
<proteinExistence type="inferred from homology"/>
<dbReference type="EC" id="1.4.99.-" evidence="1"/>
<dbReference type="EMBL" id="CP000058">
    <property type="protein sequence ID" value="AAZ34759.1"/>
    <property type="molecule type" value="Genomic_DNA"/>
</dbReference>
<dbReference type="RefSeq" id="WP_004655320.1">
    <property type="nucleotide sequence ID" value="NC_005773.3"/>
</dbReference>
<dbReference type="SMR" id="Q48PZ1"/>
<dbReference type="KEGG" id="psp:PSPPH_0223"/>
<dbReference type="eggNOG" id="COG0665">
    <property type="taxonomic scope" value="Bacteria"/>
</dbReference>
<dbReference type="HOGENOM" id="CLU_007884_9_2_6"/>
<dbReference type="UniPathway" id="UPA00043">
    <property type="reaction ID" value="UER00498"/>
</dbReference>
<dbReference type="Proteomes" id="UP000000551">
    <property type="component" value="Chromosome"/>
</dbReference>
<dbReference type="GO" id="GO:0005737">
    <property type="term" value="C:cytoplasm"/>
    <property type="evidence" value="ECO:0007669"/>
    <property type="project" value="TreeGrafter"/>
</dbReference>
<dbReference type="GO" id="GO:0005886">
    <property type="term" value="C:plasma membrane"/>
    <property type="evidence" value="ECO:0007669"/>
    <property type="project" value="TreeGrafter"/>
</dbReference>
<dbReference type="GO" id="GO:0008718">
    <property type="term" value="F:D-amino-acid dehydrogenase activity"/>
    <property type="evidence" value="ECO:0007669"/>
    <property type="project" value="UniProtKB-UniRule"/>
</dbReference>
<dbReference type="GO" id="GO:0055130">
    <property type="term" value="P:D-alanine catabolic process"/>
    <property type="evidence" value="ECO:0007669"/>
    <property type="project" value="UniProtKB-UniPathway"/>
</dbReference>
<dbReference type="FunFam" id="3.50.50.60:FF:000020">
    <property type="entry name" value="D-amino acid dehydrogenase"/>
    <property type="match status" value="1"/>
</dbReference>
<dbReference type="Gene3D" id="3.30.9.10">
    <property type="entry name" value="D-Amino Acid Oxidase, subunit A, domain 2"/>
    <property type="match status" value="1"/>
</dbReference>
<dbReference type="Gene3D" id="3.50.50.60">
    <property type="entry name" value="FAD/NAD(P)-binding domain"/>
    <property type="match status" value="2"/>
</dbReference>
<dbReference type="HAMAP" id="MF_01202">
    <property type="entry name" value="DadA"/>
    <property type="match status" value="1"/>
</dbReference>
<dbReference type="InterPro" id="IPR023080">
    <property type="entry name" value="DadA"/>
</dbReference>
<dbReference type="InterPro" id="IPR006076">
    <property type="entry name" value="FAD-dep_OxRdtase"/>
</dbReference>
<dbReference type="InterPro" id="IPR036188">
    <property type="entry name" value="FAD/NAD-bd_sf"/>
</dbReference>
<dbReference type="NCBIfam" id="NF001933">
    <property type="entry name" value="PRK00711.1"/>
    <property type="match status" value="1"/>
</dbReference>
<dbReference type="PANTHER" id="PTHR13847:SF280">
    <property type="entry name" value="D-AMINO ACID DEHYDROGENASE"/>
    <property type="match status" value="1"/>
</dbReference>
<dbReference type="PANTHER" id="PTHR13847">
    <property type="entry name" value="SARCOSINE DEHYDROGENASE-RELATED"/>
    <property type="match status" value="1"/>
</dbReference>
<dbReference type="Pfam" id="PF01266">
    <property type="entry name" value="DAO"/>
    <property type="match status" value="1"/>
</dbReference>
<dbReference type="SUPFAM" id="SSF54373">
    <property type="entry name" value="FAD-linked reductases, C-terminal domain"/>
    <property type="match status" value="1"/>
</dbReference>
<dbReference type="SUPFAM" id="SSF51905">
    <property type="entry name" value="FAD/NAD(P)-binding domain"/>
    <property type="match status" value="1"/>
</dbReference>
<evidence type="ECO:0000255" key="1">
    <source>
        <dbReference type="HAMAP-Rule" id="MF_01202"/>
    </source>
</evidence>
<sequence length="433" mass="47154">MRVLVLGSGVIGTTSAYYLARAGFQVTVVDRQPAAAMETSFANAGQVSPGYASPWAAPGVPLKAIKWLLQRHAPLAIKATADIDQYLWMAQMLRNCTASRYTVNKERMVRLSEYSRDCLDELRLETGIAYEGRSLGTTQLFRTQAQLDNAAKDIAVLEQSGVPYELLDRDGIARVEPALAGVTGILSGALRLPNDQTGDCQLFTTRLAEMAVELGVEFRYGQNIERLDHAGDRINGVWIDGKLETADRYVLALGSYSPQLLKPLGIKAPVYPLKGYSLTVPITNPAMAPTSTILDETYKVAITRFDNRIRVGGMAEIAGFDLSLNPRRRETLEMIVGDLYPQGGDLTQASFWTGLRPTTPDGTPIVGATPFRNLFLNTGHGTLGWTMACGSGRLLADLIARKTPRISAEGLDISRYGNTQENAQHVNPAPAHQ</sequence>
<feature type="chain" id="PRO_1000066104" description="D-amino acid dehydrogenase">
    <location>
        <begin position="1"/>
        <end position="433"/>
    </location>
</feature>
<feature type="binding site" evidence="1">
    <location>
        <begin position="3"/>
        <end position="17"/>
    </location>
    <ligand>
        <name>FAD</name>
        <dbReference type="ChEBI" id="CHEBI:57692"/>
    </ligand>
</feature>
<keyword id="KW-0274">FAD</keyword>
<keyword id="KW-0285">Flavoprotein</keyword>
<keyword id="KW-0560">Oxidoreductase</keyword>
<gene>
    <name evidence="1" type="primary">dadA</name>
    <name type="ordered locus">PSPPH_0223</name>
</gene>
<accession>Q48PZ1</accession>
<comment type="function">
    <text evidence="1">Oxidative deamination of D-amino acids.</text>
</comment>
<comment type="catalytic activity">
    <reaction evidence="1">
        <text>a D-alpha-amino acid + A + H2O = a 2-oxocarboxylate + AH2 + NH4(+)</text>
        <dbReference type="Rhea" id="RHEA:18125"/>
        <dbReference type="ChEBI" id="CHEBI:13193"/>
        <dbReference type="ChEBI" id="CHEBI:15377"/>
        <dbReference type="ChEBI" id="CHEBI:17499"/>
        <dbReference type="ChEBI" id="CHEBI:28938"/>
        <dbReference type="ChEBI" id="CHEBI:35179"/>
        <dbReference type="ChEBI" id="CHEBI:59871"/>
    </reaction>
</comment>
<comment type="cofactor">
    <cofactor evidence="1">
        <name>FAD</name>
        <dbReference type="ChEBI" id="CHEBI:57692"/>
    </cofactor>
</comment>
<comment type="pathway">
    <text>Amino-acid degradation; D-alanine degradation; NH(3) and pyruvate from D-alanine: step 1/1.</text>
</comment>
<comment type="similarity">
    <text evidence="1">Belongs to the DadA oxidoreductase family.</text>
</comment>
<name>DADA_PSE14</name>
<organism>
    <name type="scientific">Pseudomonas savastanoi pv. phaseolicola (strain 1448A / Race 6)</name>
    <name type="common">Pseudomonas syringae pv. phaseolicola (strain 1448A / Race 6)</name>
    <dbReference type="NCBI Taxonomy" id="264730"/>
    <lineage>
        <taxon>Bacteria</taxon>
        <taxon>Pseudomonadati</taxon>
        <taxon>Pseudomonadota</taxon>
        <taxon>Gammaproteobacteria</taxon>
        <taxon>Pseudomonadales</taxon>
        <taxon>Pseudomonadaceae</taxon>
        <taxon>Pseudomonas</taxon>
    </lineage>
</organism>
<reference key="1">
    <citation type="journal article" date="2005" name="J. Bacteriol.">
        <title>Whole-genome sequence analysis of Pseudomonas syringae pv. phaseolicola 1448A reveals divergence among pathovars in genes involved in virulence and transposition.</title>
        <authorList>
            <person name="Joardar V."/>
            <person name="Lindeberg M."/>
            <person name="Jackson R.W."/>
            <person name="Selengut J."/>
            <person name="Dodson R."/>
            <person name="Brinkac L.M."/>
            <person name="Daugherty S.C."/>
            <person name="DeBoy R.T."/>
            <person name="Durkin A.S."/>
            <person name="Gwinn Giglio M."/>
            <person name="Madupu R."/>
            <person name="Nelson W.C."/>
            <person name="Rosovitz M.J."/>
            <person name="Sullivan S.A."/>
            <person name="Crabtree J."/>
            <person name="Creasy T."/>
            <person name="Davidsen T.M."/>
            <person name="Haft D.H."/>
            <person name="Zafar N."/>
            <person name="Zhou L."/>
            <person name="Halpin R."/>
            <person name="Holley T."/>
            <person name="Khouri H.M."/>
            <person name="Feldblyum T.V."/>
            <person name="White O."/>
            <person name="Fraser C.M."/>
            <person name="Chatterjee A.K."/>
            <person name="Cartinhour S."/>
            <person name="Schneider D."/>
            <person name="Mansfield J.W."/>
            <person name="Collmer A."/>
            <person name="Buell R."/>
        </authorList>
    </citation>
    <scope>NUCLEOTIDE SEQUENCE [LARGE SCALE GENOMIC DNA]</scope>
    <source>
        <strain>1448A / Race 6</strain>
    </source>
</reference>